<evidence type="ECO:0000255" key="1">
    <source>
        <dbReference type="HAMAP-Rule" id="MF_01020"/>
    </source>
</evidence>
<keyword id="KW-0028">Amino-acid biosynthesis</keyword>
<keyword id="KW-0067">ATP-binding</keyword>
<keyword id="KW-0963">Cytoplasm</keyword>
<keyword id="KW-0368">Histidine biosynthesis</keyword>
<keyword id="KW-0378">Hydrolase</keyword>
<keyword id="KW-0547">Nucleotide-binding</keyword>
<keyword id="KW-1185">Reference proteome</keyword>
<sequence>MKTFESLFAELSEKAQTRPEGSLTVDELDKGTHFIGKKIIEEAGETWMAAEYEGADRTAEEMSQLLYHVQVMMIKHGLTLEDVYKHL</sequence>
<feature type="chain" id="PRO_0000136346" description="Phosphoribosyl-ATP pyrophosphatase">
    <location>
        <begin position="1"/>
        <end position="87"/>
    </location>
</feature>
<reference key="1">
    <citation type="journal article" date="2002" name="Proc. Natl. Acad. Sci. U.S.A.">
        <title>The genome sequence of Bifidobacterium longum reflects its adaptation to the human gastrointestinal tract.</title>
        <authorList>
            <person name="Schell M.A."/>
            <person name="Karmirantzou M."/>
            <person name="Snel B."/>
            <person name="Vilanova D."/>
            <person name="Berger B."/>
            <person name="Pessi G."/>
            <person name="Zwahlen M.-C."/>
            <person name="Desiere F."/>
            <person name="Bork P."/>
            <person name="Delley M."/>
            <person name="Pridmore R.D."/>
            <person name="Arigoni F."/>
        </authorList>
    </citation>
    <scope>NUCLEOTIDE SEQUENCE [LARGE SCALE GENOMIC DNA]</scope>
    <source>
        <strain>NCC 2705</strain>
    </source>
</reference>
<protein>
    <recommendedName>
        <fullName evidence="1">Phosphoribosyl-ATP pyrophosphatase</fullName>
        <shortName evidence="1">PRA-PH</shortName>
        <ecNumber evidence="1">3.6.1.31</ecNumber>
    </recommendedName>
</protein>
<name>HIS2_BIFLO</name>
<dbReference type="EC" id="3.6.1.31" evidence="1"/>
<dbReference type="EMBL" id="AE014295">
    <property type="protein sequence ID" value="AAN24569.1"/>
    <property type="molecule type" value="Genomic_DNA"/>
</dbReference>
<dbReference type="RefSeq" id="NP_695933.1">
    <property type="nucleotide sequence ID" value="NC_004307.2"/>
</dbReference>
<dbReference type="RefSeq" id="WP_007054261.1">
    <property type="nucleotide sequence ID" value="NC_004307.2"/>
</dbReference>
<dbReference type="SMR" id="Q8G694"/>
<dbReference type="STRING" id="206672.BL0752"/>
<dbReference type="EnsemblBacteria" id="AAN24569">
    <property type="protein sequence ID" value="AAN24569"/>
    <property type="gene ID" value="BL0752"/>
</dbReference>
<dbReference type="KEGG" id="blo:BL0752"/>
<dbReference type="PATRIC" id="fig|206672.9.peg.451"/>
<dbReference type="HOGENOM" id="CLU_123337_2_1_11"/>
<dbReference type="OrthoDB" id="3212875at2"/>
<dbReference type="PhylomeDB" id="Q8G694"/>
<dbReference type="UniPathway" id="UPA00031">
    <property type="reaction ID" value="UER00007"/>
</dbReference>
<dbReference type="Proteomes" id="UP000000439">
    <property type="component" value="Chromosome"/>
</dbReference>
<dbReference type="GO" id="GO:0005737">
    <property type="term" value="C:cytoplasm"/>
    <property type="evidence" value="ECO:0007669"/>
    <property type="project" value="UniProtKB-SubCell"/>
</dbReference>
<dbReference type="GO" id="GO:0005524">
    <property type="term" value="F:ATP binding"/>
    <property type="evidence" value="ECO:0007669"/>
    <property type="project" value="UniProtKB-KW"/>
</dbReference>
<dbReference type="GO" id="GO:0004636">
    <property type="term" value="F:phosphoribosyl-ATP diphosphatase activity"/>
    <property type="evidence" value="ECO:0007669"/>
    <property type="project" value="UniProtKB-UniRule"/>
</dbReference>
<dbReference type="GO" id="GO:0000105">
    <property type="term" value="P:L-histidine biosynthetic process"/>
    <property type="evidence" value="ECO:0007669"/>
    <property type="project" value="UniProtKB-UniRule"/>
</dbReference>
<dbReference type="CDD" id="cd11547">
    <property type="entry name" value="NTP-PPase_HisE"/>
    <property type="match status" value="1"/>
</dbReference>
<dbReference type="Gene3D" id="1.10.287.1080">
    <property type="entry name" value="MazG-like"/>
    <property type="match status" value="1"/>
</dbReference>
<dbReference type="HAMAP" id="MF_01020">
    <property type="entry name" value="HisE"/>
    <property type="match status" value="1"/>
</dbReference>
<dbReference type="InterPro" id="IPR008179">
    <property type="entry name" value="HisE"/>
</dbReference>
<dbReference type="InterPro" id="IPR021130">
    <property type="entry name" value="PRib-ATP_PPHydrolase-like"/>
</dbReference>
<dbReference type="NCBIfam" id="TIGR03188">
    <property type="entry name" value="histidine_hisI"/>
    <property type="match status" value="1"/>
</dbReference>
<dbReference type="NCBIfam" id="NF001610">
    <property type="entry name" value="PRK00400.1-1"/>
    <property type="match status" value="1"/>
</dbReference>
<dbReference type="PANTHER" id="PTHR42945">
    <property type="entry name" value="HISTIDINE BIOSYNTHESIS BIFUNCTIONAL PROTEIN"/>
    <property type="match status" value="1"/>
</dbReference>
<dbReference type="PANTHER" id="PTHR42945:SF1">
    <property type="entry name" value="HISTIDINE BIOSYNTHESIS BIFUNCTIONAL PROTEIN HIS7"/>
    <property type="match status" value="1"/>
</dbReference>
<dbReference type="Pfam" id="PF01503">
    <property type="entry name" value="PRA-PH"/>
    <property type="match status" value="1"/>
</dbReference>
<dbReference type="SUPFAM" id="SSF101386">
    <property type="entry name" value="all-alpha NTP pyrophosphatases"/>
    <property type="match status" value="1"/>
</dbReference>
<comment type="catalytic activity">
    <reaction evidence="1">
        <text>1-(5-phospho-beta-D-ribosyl)-ATP + H2O = 1-(5-phospho-beta-D-ribosyl)-5'-AMP + diphosphate + H(+)</text>
        <dbReference type="Rhea" id="RHEA:22828"/>
        <dbReference type="ChEBI" id="CHEBI:15377"/>
        <dbReference type="ChEBI" id="CHEBI:15378"/>
        <dbReference type="ChEBI" id="CHEBI:33019"/>
        <dbReference type="ChEBI" id="CHEBI:59457"/>
        <dbReference type="ChEBI" id="CHEBI:73183"/>
        <dbReference type="EC" id="3.6.1.31"/>
    </reaction>
</comment>
<comment type="pathway">
    <text evidence="1">Amino-acid biosynthesis; L-histidine biosynthesis; L-histidine from 5-phospho-alpha-D-ribose 1-diphosphate: step 2/9.</text>
</comment>
<comment type="subcellular location">
    <subcellularLocation>
        <location evidence="1">Cytoplasm</location>
    </subcellularLocation>
</comment>
<comment type="similarity">
    <text evidence="1">Belongs to the PRA-PH family.</text>
</comment>
<organism>
    <name type="scientific">Bifidobacterium longum (strain NCC 2705)</name>
    <dbReference type="NCBI Taxonomy" id="206672"/>
    <lineage>
        <taxon>Bacteria</taxon>
        <taxon>Bacillati</taxon>
        <taxon>Actinomycetota</taxon>
        <taxon>Actinomycetes</taxon>
        <taxon>Bifidobacteriales</taxon>
        <taxon>Bifidobacteriaceae</taxon>
        <taxon>Bifidobacterium</taxon>
    </lineage>
</organism>
<accession>Q8G694</accession>
<proteinExistence type="inferred from homology"/>
<gene>
    <name evidence="1" type="primary">hisE</name>
    <name type="ordered locus">BL0752</name>
</gene>